<protein>
    <recommendedName>
        <fullName evidence="1">Pescadillo homolog</fullName>
        <shortName evidence="4">PfPES</shortName>
    </recommendedName>
</protein>
<proteinExistence type="evidence at protein level"/>
<evidence type="ECO:0000255" key="1">
    <source>
        <dbReference type="HAMAP-Rule" id="MF_03028"/>
    </source>
</evidence>
<evidence type="ECO:0000256" key="2">
    <source>
        <dbReference type="SAM" id="MobiDB-lite"/>
    </source>
</evidence>
<evidence type="ECO:0000269" key="3">
    <source>
    </source>
</evidence>
<evidence type="ECO:0000303" key="4">
    <source>
    </source>
</evidence>
<organism>
    <name type="scientific">Plasmodium falciparum (isolate 3D7)</name>
    <dbReference type="NCBI Taxonomy" id="36329"/>
    <lineage>
        <taxon>Eukaryota</taxon>
        <taxon>Sar</taxon>
        <taxon>Alveolata</taxon>
        <taxon>Apicomplexa</taxon>
        <taxon>Aconoidasida</taxon>
        <taxon>Haemosporida</taxon>
        <taxon>Plasmodiidae</taxon>
        <taxon>Plasmodium</taxon>
        <taxon>Plasmodium (Laverania)</taxon>
    </lineage>
</organism>
<name>PESC_PLAF7</name>
<feature type="chain" id="PRO_0000370473" description="Pescadillo homolog">
    <location>
        <begin position="1"/>
        <end position="643"/>
    </location>
</feature>
<feature type="domain" description="BRCT" evidence="1">
    <location>
        <begin position="378"/>
        <end position="474"/>
    </location>
</feature>
<feature type="region of interest" description="Disordered" evidence="2">
    <location>
        <begin position="305"/>
        <end position="329"/>
    </location>
</feature>
<feature type="coiled-coil region" evidence="1">
    <location>
        <begin position="531"/>
        <end position="615"/>
    </location>
</feature>
<feature type="compositionally biased region" description="Basic and acidic residues" evidence="2">
    <location>
        <begin position="305"/>
        <end position="323"/>
    </location>
</feature>
<sequence>MHIHKLKKKIKKKKEGKYLTKKHILRKLFLNEEEFRKLCIFKGIYPKDFKEIPLKYRKKFYKHKVFYTRNDFLKLSHEKIINDFRKIKIYLKKYKKCKLTLEDFTRSKNIVANFPVYKLEHIIKERYPILSYAVDHLDDALSCIIAYSQLPSNHKYGIKNNMVKTCEMLKDHFHYYVYKTNRIKKAFISVKGYYLQAEILKKKVTWIIPHIFTPYLDTSIDFKLISDFIEYYIALLKFVLFKLYKLDNMLYPPKQDNDLKNEKLAHLSYDKDYSTNENNIDINMNQELQSKCNVNTNEDLNTCQEKTKEKNHKSDNNPHEHTTNIDNNNFNNIHLQDNCDLNKNEGKNLTNNIIHKNSEADNGHVHPDDHIDIDEHNKLKELFKNHIFYIHNDMPFDVLSIIILSCGGKISWNSRISPIHYDDNNITHEIYEKDKNTIHLNNPENEYKRIHIQPQYIFDCLNEKNILPCSDYLTEKENLPVHLSPFIEDENFKNLVKKEEYTINKMLNQKIKEEQYKDFSKENNNIFKSPNYKEEEEEENDDRETANLILNNKRQAALNNQLERENEDINQLKENDTILNKQTDQTQILKTQNLKSQEQEIQRHKIVLSKKKRKLFARIDMAQKRQKATIDKFMKKINKNKSK</sequence>
<gene>
    <name evidence="4" type="primary">PES</name>
    <name type="ORF">PF11_0090</name>
    <name type="ORF">PF3D7_1107700</name>
</gene>
<keyword id="KW-0175">Coiled coil</keyword>
<keyword id="KW-0539">Nucleus</keyword>
<keyword id="KW-1185">Reference proteome</keyword>
<keyword id="KW-0690">Ribosome biogenesis</keyword>
<keyword id="KW-0698">rRNA processing</keyword>
<comment type="function">
    <text evidence="1">Required for maturation of ribosomal RNAs and formation of the large ribosomal subunit.</text>
</comment>
<comment type="subunit">
    <text evidence="3">Interacts with dual specificity protein phosphatase YVH1.</text>
</comment>
<comment type="subcellular location">
    <subcellularLocation>
        <location evidence="3">Nucleus</location>
    </subcellularLocation>
    <subcellularLocation>
        <location evidence="1">Nucleus</location>
        <location evidence="1">Nucleolus</location>
    </subcellularLocation>
    <subcellularLocation>
        <location evidence="1">Nucleus</location>
        <location evidence="1">Nucleoplasm</location>
    </subcellularLocation>
</comment>
<comment type="developmental stage">
    <text evidence="3">Expressed during the parasite blood stage, including in rings, trophozoites and schizonts (at protein level) (PubMed:14698441). Expression increases in trophozoites and schizonts (PubMed:14698441).</text>
</comment>
<comment type="similarity">
    <text evidence="1">Belongs to the pescadillo family.</text>
</comment>
<dbReference type="EMBL" id="LN999945">
    <property type="protein sequence ID" value="CZT98743.1"/>
    <property type="molecule type" value="Genomic_DNA"/>
</dbReference>
<dbReference type="RefSeq" id="XP_001347765.1">
    <property type="nucleotide sequence ID" value="XM_001347729.1"/>
</dbReference>
<dbReference type="SMR" id="Q8IIS5"/>
<dbReference type="BioGRID" id="1206041">
    <property type="interactions" value="1"/>
</dbReference>
<dbReference type="FunCoup" id="Q8IIS5">
    <property type="interactions" value="690"/>
</dbReference>
<dbReference type="IntAct" id="Q8IIS5">
    <property type="interactions" value="1"/>
</dbReference>
<dbReference type="STRING" id="36329.Q8IIS5"/>
<dbReference type="PaxDb" id="5833-PF11_0090"/>
<dbReference type="EnsemblProtists" id="CZT98743">
    <property type="protein sequence ID" value="CZT98743"/>
    <property type="gene ID" value="PF3D7_1107700"/>
</dbReference>
<dbReference type="GeneID" id="810641"/>
<dbReference type="KEGG" id="pfa:PF3D7_1107700"/>
<dbReference type="VEuPathDB" id="PlasmoDB:PF3D7_1107700"/>
<dbReference type="HOGENOM" id="CLU_019619_1_0_1"/>
<dbReference type="InParanoid" id="Q8IIS5"/>
<dbReference type="OMA" id="QKVTWIV"/>
<dbReference type="OrthoDB" id="10264910at2759"/>
<dbReference type="PhylomeDB" id="Q8IIS5"/>
<dbReference type="Proteomes" id="UP000001450">
    <property type="component" value="Chromosome 11"/>
</dbReference>
<dbReference type="GO" id="GO:0005654">
    <property type="term" value="C:nucleoplasm"/>
    <property type="evidence" value="ECO:0000314"/>
    <property type="project" value="GeneDB"/>
</dbReference>
<dbReference type="GO" id="GO:0070545">
    <property type="term" value="C:PeBoW complex"/>
    <property type="evidence" value="ECO:0000318"/>
    <property type="project" value="GO_Central"/>
</dbReference>
<dbReference type="GO" id="GO:0030687">
    <property type="term" value="C:preribosome, large subunit precursor"/>
    <property type="evidence" value="ECO:0007669"/>
    <property type="project" value="UniProtKB-UniRule"/>
</dbReference>
<dbReference type="GO" id="GO:0043021">
    <property type="term" value="F:ribonucleoprotein complex binding"/>
    <property type="evidence" value="ECO:0007669"/>
    <property type="project" value="UniProtKB-UniRule"/>
</dbReference>
<dbReference type="GO" id="GO:0003723">
    <property type="term" value="F:RNA binding"/>
    <property type="evidence" value="ECO:0000318"/>
    <property type="project" value="GO_Central"/>
</dbReference>
<dbReference type="GO" id="GO:0000466">
    <property type="term" value="P:maturation of 5.8S rRNA from tricistronic rRNA transcript (SSU-rRNA, 5.8S rRNA, LSU-rRNA)"/>
    <property type="evidence" value="ECO:0007669"/>
    <property type="project" value="UniProtKB-UniRule"/>
</dbReference>
<dbReference type="GO" id="GO:0000463">
    <property type="term" value="P:maturation of LSU-rRNA from tricistronic rRNA transcript (SSU-rRNA, 5.8S rRNA, LSU-rRNA)"/>
    <property type="evidence" value="ECO:0000318"/>
    <property type="project" value="GO_Central"/>
</dbReference>
<dbReference type="GO" id="GO:0051726">
    <property type="term" value="P:regulation of cell cycle"/>
    <property type="evidence" value="ECO:0000314"/>
    <property type="project" value="GeneDB"/>
</dbReference>
<dbReference type="FunFam" id="3.40.50.10190:FF:000071">
    <property type="entry name" value="Pescadillo homolog"/>
    <property type="match status" value="1"/>
</dbReference>
<dbReference type="Gene3D" id="3.40.50.10190">
    <property type="entry name" value="BRCT domain"/>
    <property type="match status" value="1"/>
</dbReference>
<dbReference type="HAMAP" id="MF_03028">
    <property type="entry name" value="Pescadillo"/>
    <property type="match status" value="1"/>
</dbReference>
<dbReference type="InterPro" id="IPR001357">
    <property type="entry name" value="BRCT_dom"/>
</dbReference>
<dbReference type="InterPro" id="IPR036420">
    <property type="entry name" value="BRCT_dom_sf"/>
</dbReference>
<dbReference type="InterPro" id="IPR010613">
    <property type="entry name" value="PES"/>
</dbReference>
<dbReference type="PANTHER" id="PTHR12221">
    <property type="entry name" value="PESCADILLO - RELATED"/>
    <property type="match status" value="1"/>
</dbReference>
<dbReference type="PANTHER" id="PTHR12221:SF6">
    <property type="entry name" value="PESCADILLO HOMOLOG"/>
    <property type="match status" value="1"/>
</dbReference>
<dbReference type="Pfam" id="PF16589">
    <property type="entry name" value="BRCT_2"/>
    <property type="match status" value="1"/>
</dbReference>
<dbReference type="Pfam" id="PF06732">
    <property type="entry name" value="Pescadillo_N"/>
    <property type="match status" value="1"/>
</dbReference>
<dbReference type="SUPFAM" id="SSF52113">
    <property type="entry name" value="BRCT domain"/>
    <property type="match status" value="1"/>
</dbReference>
<dbReference type="PROSITE" id="PS50172">
    <property type="entry name" value="BRCT"/>
    <property type="match status" value="1"/>
</dbReference>
<reference key="1">
    <citation type="journal article" date="2002" name="Nature">
        <title>Genome sequence of the human malaria parasite Plasmodium falciparum.</title>
        <authorList>
            <person name="Gardner M.J."/>
            <person name="Hall N."/>
            <person name="Fung E."/>
            <person name="White O."/>
            <person name="Berriman M."/>
            <person name="Hyman R.W."/>
            <person name="Carlton J.M."/>
            <person name="Pain A."/>
            <person name="Nelson K.E."/>
            <person name="Bowman S."/>
            <person name="Paulsen I.T."/>
            <person name="James K.D."/>
            <person name="Eisen J.A."/>
            <person name="Rutherford K.M."/>
            <person name="Salzberg S.L."/>
            <person name="Craig A."/>
            <person name="Kyes S."/>
            <person name="Chan M.-S."/>
            <person name="Nene V."/>
            <person name="Shallom S.J."/>
            <person name="Suh B."/>
            <person name="Peterson J."/>
            <person name="Angiuoli S."/>
            <person name="Pertea M."/>
            <person name="Allen J."/>
            <person name="Selengut J."/>
            <person name="Haft D."/>
            <person name="Mather M.W."/>
            <person name="Vaidya A.B."/>
            <person name="Martin D.M.A."/>
            <person name="Fairlamb A.H."/>
            <person name="Fraunholz M.J."/>
            <person name="Roos D.S."/>
            <person name="Ralph S.A."/>
            <person name="McFadden G.I."/>
            <person name="Cummings L.M."/>
            <person name="Subramanian G.M."/>
            <person name="Mungall C."/>
            <person name="Venter J.C."/>
            <person name="Carucci D.J."/>
            <person name="Hoffman S.L."/>
            <person name="Newbold C."/>
            <person name="Davis R.W."/>
            <person name="Fraser C.M."/>
            <person name="Barrell B.G."/>
        </authorList>
    </citation>
    <scope>NUCLEOTIDE SEQUENCE [LARGE SCALE GENOMIC DNA]</scope>
    <source>
        <strain>3D7</strain>
    </source>
</reference>
<reference key="2">
    <citation type="journal article" date="2004" name="Mol. Biochem. Parasitol.">
        <title>A zinc-binding dual-specificity YVH1 phosphatase in the malaria parasite, Plasmodium falciparum, and its interaction with the nuclear protein, pescadillo.</title>
        <authorList>
            <person name="Kumar R."/>
            <person name="Musiyenko A."/>
            <person name="Cioffi E."/>
            <person name="Oldenburg A."/>
            <person name="Adams B."/>
            <person name="Bitko V."/>
            <person name="Krishna S.S."/>
            <person name="Barik S."/>
        </authorList>
    </citation>
    <scope>INTERACTION WITH YVH1</scope>
    <scope>SUBCELLULAR LOCATION</scope>
    <scope>DEVELOPMENTAL STAGE</scope>
</reference>
<accession>Q8IIS5</accession>
<accession>A0A144A022</accession>